<organism>
    <name type="scientific">Pectobacterium carotovorum subsp. carotovorum (strain PC1)</name>
    <dbReference type="NCBI Taxonomy" id="561230"/>
    <lineage>
        <taxon>Bacteria</taxon>
        <taxon>Pseudomonadati</taxon>
        <taxon>Pseudomonadota</taxon>
        <taxon>Gammaproteobacteria</taxon>
        <taxon>Enterobacterales</taxon>
        <taxon>Pectobacteriaceae</taxon>
        <taxon>Pectobacterium</taxon>
    </lineage>
</organism>
<name>RL5_PECCP</name>
<gene>
    <name evidence="1" type="primary">rplE</name>
    <name type="ordered locus">PC1_3810</name>
</gene>
<feature type="chain" id="PRO_1000214638" description="Large ribosomal subunit protein uL5">
    <location>
        <begin position="1"/>
        <end position="179"/>
    </location>
</feature>
<proteinExistence type="inferred from homology"/>
<keyword id="KW-0687">Ribonucleoprotein</keyword>
<keyword id="KW-0689">Ribosomal protein</keyword>
<keyword id="KW-0694">RNA-binding</keyword>
<keyword id="KW-0699">rRNA-binding</keyword>
<keyword id="KW-0820">tRNA-binding</keyword>
<protein>
    <recommendedName>
        <fullName evidence="1">Large ribosomal subunit protein uL5</fullName>
    </recommendedName>
    <alternativeName>
        <fullName evidence="2">50S ribosomal protein L5</fullName>
    </alternativeName>
</protein>
<comment type="function">
    <text evidence="1">This is one of the proteins that bind and probably mediate the attachment of the 5S RNA into the large ribosomal subunit, where it forms part of the central protuberance. In the 70S ribosome it contacts protein S13 of the 30S subunit (bridge B1b), connecting the 2 subunits; this bridge is implicated in subunit movement. Contacts the P site tRNA; the 5S rRNA and some of its associated proteins might help stabilize positioning of ribosome-bound tRNAs.</text>
</comment>
<comment type="subunit">
    <text evidence="1">Part of the 50S ribosomal subunit; part of the 5S rRNA/L5/L18/L25 subcomplex. Contacts the 5S rRNA and the P site tRNA. Forms a bridge to the 30S subunit in the 70S ribosome.</text>
</comment>
<comment type="similarity">
    <text evidence="1">Belongs to the universal ribosomal protein uL5 family.</text>
</comment>
<dbReference type="EMBL" id="CP001657">
    <property type="protein sequence ID" value="ACT14825.1"/>
    <property type="molecule type" value="Genomic_DNA"/>
</dbReference>
<dbReference type="RefSeq" id="WP_005970265.1">
    <property type="nucleotide sequence ID" value="NC_012917.1"/>
</dbReference>
<dbReference type="SMR" id="C6DG62"/>
<dbReference type="STRING" id="561230.PC1_3810"/>
<dbReference type="GeneID" id="90765114"/>
<dbReference type="KEGG" id="pct:PC1_3810"/>
<dbReference type="eggNOG" id="COG0094">
    <property type="taxonomic scope" value="Bacteria"/>
</dbReference>
<dbReference type="HOGENOM" id="CLU_061015_2_1_6"/>
<dbReference type="OrthoDB" id="9806626at2"/>
<dbReference type="Proteomes" id="UP000002736">
    <property type="component" value="Chromosome"/>
</dbReference>
<dbReference type="GO" id="GO:1990904">
    <property type="term" value="C:ribonucleoprotein complex"/>
    <property type="evidence" value="ECO:0007669"/>
    <property type="project" value="UniProtKB-KW"/>
</dbReference>
<dbReference type="GO" id="GO:0005840">
    <property type="term" value="C:ribosome"/>
    <property type="evidence" value="ECO:0007669"/>
    <property type="project" value="UniProtKB-KW"/>
</dbReference>
<dbReference type="GO" id="GO:0019843">
    <property type="term" value="F:rRNA binding"/>
    <property type="evidence" value="ECO:0007669"/>
    <property type="project" value="UniProtKB-UniRule"/>
</dbReference>
<dbReference type="GO" id="GO:0003735">
    <property type="term" value="F:structural constituent of ribosome"/>
    <property type="evidence" value="ECO:0007669"/>
    <property type="project" value="InterPro"/>
</dbReference>
<dbReference type="GO" id="GO:0000049">
    <property type="term" value="F:tRNA binding"/>
    <property type="evidence" value="ECO:0007669"/>
    <property type="project" value="UniProtKB-UniRule"/>
</dbReference>
<dbReference type="GO" id="GO:0006412">
    <property type="term" value="P:translation"/>
    <property type="evidence" value="ECO:0007669"/>
    <property type="project" value="UniProtKB-UniRule"/>
</dbReference>
<dbReference type="FunFam" id="3.30.1440.10:FF:000001">
    <property type="entry name" value="50S ribosomal protein L5"/>
    <property type="match status" value="1"/>
</dbReference>
<dbReference type="Gene3D" id="3.30.1440.10">
    <property type="match status" value="1"/>
</dbReference>
<dbReference type="HAMAP" id="MF_01333_B">
    <property type="entry name" value="Ribosomal_uL5_B"/>
    <property type="match status" value="1"/>
</dbReference>
<dbReference type="InterPro" id="IPR002132">
    <property type="entry name" value="Ribosomal_uL5"/>
</dbReference>
<dbReference type="InterPro" id="IPR020930">
    <property type="entry name" value="Ribosomal_uL5_bac-type"/>
</dbReference>
<dbReference type="InterPro" id="IPR031309">
    <property type="entry name" value="Ribosomal_uL5_C"/>
</dbReference>
<dbReference type="InterPro" id="IPR020929">
    <property type="entry name" value="Ribosomal_uL5_CS"/>
</dbReference>
<dbReference type="InterPro" id="IPR022803">
    <property type="entry name" value="Ribosomal_uL5_dom_sf"/>
</dbReference>
<dbReference type="InterPro" id="IPR031310">
    <property type="entry name" value="Ribosomal_uL5_N"/>
</dbReference>
<dbReference type="NCBIfam" id="NF000585">
    <property type="entry name" value="PRK00010.1"/>
    <property type="match status" value="1"/>
</dbReference>
<dbReference type="PANTHER" id="PTHR11994">
    <property type="entry name" value="60S RIBOSOMAL PROTEIN L11-RELATED"/>
    <property type="match status" value="1"/>
</dbReference>
<dbReference type="Pfam" id="PF00281">
    <property type="entry name" value="Ribosomal_L5"/>
    <property type="match status" value="1"/>
</dbReference>
<dbReference type="Pfam" id="PF00673">
    <property type="entry name" value="Ribosomal_L5_C"/>
    <property type="match status" value="1"/>
</dbReference>
<dbReference type="PIRSF" id="PIRSF002161">
    <property type="entry name" value="Ribosomal_L5"/>
    <property type="match status" value="1"/>
</dbReference>
<dbReference type="SUPFAM" id="SSF55282">
    <property type="entry name" value="RL5-like"/>
    <property type="match status" value="1"/>
</dbReference>
<dbReference type="PROSITE" id="PS00358">
    <property type="entry name" value="RIBOSOMAL_L5"/>
    <property type="match status" value="1"/>
</dbReference>
<reference key="1">
    <citation type="submission" date="2009-07" db="EMBL/GenBank/DDBJ databases">
        <title>Complete sequence of Pectobacterium carotovorum subsp. carotovorum PC1.</title>
        <authorList>
            <consortium name="US DOE Joint Genome Institute"/>
            <person name="Lucas S."/>
            <person name="Copeland A."/>
            <person name="Lapidus A."/>
            <person name="Glavina del Rio T."/>
            <person name="Tice H."/>
            <person name="Bruce D."/>
            <person name="Goodwin L."/>
            <person name="Pitluck S."/>
            <person name="Munk A.C."/>
            <person name="Brettin T."/>
            <person name="Detter J.C."/>
            <person name="Han C."/>
            <person name="Tapia R."/>
            <person name="Larimer F."/>
            <person name="Land M."/>
            <person name="Hauser L."/>
            <person name="Kyrpides N."/>
            <person name="Mikhailova N."/>
            <person name="Balakrishnan V."/>
            <person name="Glasner J."/>
            <person name="Perna N.T."/>
        </authorList>
    </citation>
    <scope>NUCLEOTIDE SEQUENCE [LARGE SCALE GENOMIC DNA]</scope>
    <source>
        <strain>PC1</strain>
    </source>
</reference>
<evidence type="ECO:0000255" key="1">
    <source>
        <dbReference type="HAMAP-Rule" id="MF_01333"/>
    </source>
</evidence>
<evidence type="ECO:0000305" key="2"/>
<accession>C6DG62</accession>
<sequence>MAKLHDYYKDEVVKKLMTEFNYNSVMQVPRVEKITLNMGVGEAIADKKLLDNAAADLAAISGQKPLITKARKSVAGFKIRQGYPIGCKVTLRGERMWEFLERLISIAVPRIRDFRGLSAKSFDGRGNYSMGVREQIIFPEIDYDKVDRVRGLDITITTTAKSDDEGRALLAAFNFPFRK</sequence>